<comment type="function">
    <text evidence="1 3 4">N-acetyl glucosamine (GlcNAc) transferase that catalyzes the transfer of GlcNAc via a beta1-&gt;3 linkage from UDP-GlcNAc to the non-reducing terminal galactose (Gal) in the linearly growing chain of N- and O-linked keratan sulfate proteoglycans. Cooperates with B4GALT4 galactosyltransferase and CHST6 and CHST1 sulfotransferases to construct and elongate mono- and disulfated disaccharide units [-&gt;3Galbeta1-&gt;4(6-sulfoGlcNAcbeta)1-&gt;] and [-&gt;3(6-sulfoGalbeta)1-&gt;4(6-sulfoGlcNAcbeta)1-&gt;] within keratan sulfate polymer (By similarity). Involved in biosynthesis of N-linked keratan sulfate proteoglycans in cornea, with an impact on proteoglycan fibril organization and corneal transparency (PubMed:29625490). May play a role in the maintenance of tissue architecture by suppressing cellular motility and invasion (PubMed:12061784).</text>
</comment>
<comment type="pathway">
    <text evidence="1">Protein modification; protein glycosylation.</text>
</comment>
<comment type="subcellular location">
    <subcellularLocation>
        <location evidence="5">Golgi apparatus membrane</location>
        <topology evidence="5">Single-pass type II membrane protein</topology>
    </subcellularLocation>
</comment>
<comment type="tissue specificity">
    <text evidence="3">Strongly expressed in placenta and colon. Moderately expressed in lung, stomach, small intestine and kidney. Very weakly expressed in cerebrum, cerebellum, heart and testis.</text>
</comment>
<comment type="disruption phenotype">
    <text evidence="4">Mutant mice are born at the expected Mendelian rate and have normal developmental and reproductive potential. They develop an abnormal corneal ultrastructure characterized by a lack of keratan sulfate proteoglycans that appears to be compensated by increased amount of elongated, branched electron dense chondroitin sulfate/dermatan sulfate proteoglycan filaments.</text>
</comment>
<comment type="similarity">
    <text evidence="5">Belongs to the glycosyltransferase 31 family.</text>
</comment>
<gene>
    <name type="primary">B3gnt7</name>
</gene>
<organism>
    <name type="scientific">Mus musculus</name>
    <name type="common">Mouse</name>
    <dbReference type="NCBI Taxonomy" id="10090"/>
    <lineage>
        <taxon>Eukaryota</taxon>
        <taxon>Metazoa</taxon>
        <taxon>Chordata</taxon>
        <taxon>Craniata</taxon>
        <taxon>Vertebrata</taxon>
        <taxon>Euteleostomi</taxon>
        <taxon>Mammalia</taxon>
        <taxon>Eutheria</taxon>
        <taxon>Euarchontoglires</taxon>
        <taxon>Glires</taxon>
        <taxon>Rodentia</taxon>
        <taxon>Myomorpha</taxon>
        <taxon>Muroidea</taxon>
        <taxon>Muridae</taxon>
        <taxon>Murinae</taxon>
        <taxon>Mus</taxon>
        <taxon>Mus</taxon>
    </lineage>
</organism>
<accession>Q8K0J2</accession>
<accession>Q3U3L9</accession>
<accession>Q3V283</accession>
<accession>Q6PA02</accession>
<accession>Q8BJS5</accession>
<accession>Q8K437</accession>
<sequence length="397" mass="45379">MSLWKKTLYKSVCLALALLVAVTVFQRSVTPGQFLQDPLPPTPGPAKTGNLVNPNSFWKSSKDVAAPTPTVPRGPQVWDVITTNCSININLTHQPWFQSLEPHFRQFLAYRHCRYFPMLLNHPEKCAGDVYMLVVVKSVITQHDRREVIRQTWGHEWESAGLGRGAVRTLFLLGTASKQEERTHYQQLLAYEDRLYADILQWDFLDSFFNLTLKEIHFLKWLDIYCPNVPFVFKGDDDVFVNPTNLLEFLSDRQPQENLFVGDVLKHARPIRKKDNKYYIPAVMYGKATYPPYAGGGGFLMSGSLARQLHHACDTLELFPIDDVFLGMCLEVLGVKPTGHEGFKTFGISRVRSSRMNKEPCFYRAMLVVHKLLPAELLAMWDLVHSNLTCSVKFQVL</sequence>
<reference key="1">
    <citation type="journal article" date="2002" name="Biochem. Biophys. Res. Commun.">
        <title>A novel beta1,3-N-acetylglucosaminyltransferase involved in invasion of cancer cells as assayed in vitro.</title>
        <authorList>
            <person name="Kataoka K."/>
            <person name="Huh N.-H."/>
        </authorList>
    </citation>
    <scope>NUCLEOTIDE SEQUENCE [MRNA]</scope>
    <scope>FUNCTION</scope>
    <scope>TISSUE SPECIFICITY</scope>
    <source>
        <strain>ICR</strain>
        <tissue>Placenta</tissue>
    </source>
</reference>
<reference key="2">
    <citation type="journal article" date="2005" name="Science">
        <title>The transcriptional landscape of the mammalian genome.</title>
        <authorList>
            <person name="Carninci P."/>
            <person name="Kasukawa T."/>
            <person name="Katayama S."/>
            <person name="Gough J."/>
            <person name="Frith M.C."/>
            <person name="Maeda N."/>
            <person name="Oyama R."/>
            <person name="Ravasi T."/>
            <person name="Lenhard B."/>
            <person name="Wells C."/>
            <person name="Kodzius R."/>
            <person name="Shimokawa K."/>
            <person name="Bajic V.B."/>
            <person name="Brenner S.E."/>
            <person name="Batalov S."/>
            <person name="Forrest A.R."/>
            <person name="Zavolan M."/>
            <person name="Davis M.J."/>
            <person name="Wilming L.G."/>
            <person name="Aidinis V."/>
            <person name="Allen J.E."/>
            <person name="Ambesi-Impiombato A."/>
            <person name="Apweiler R."/>
            <person name="Aturaliya R.N."/>
            <person name="Bailey T.L."/>
            <person name="Bansal M."/>
            <person name="Baxter L."/>
            <person name="Beisel K.W."/>
            <person name="Bersano T."/>
            <person name="Bono H."/>
            <person name="Chalk A.M."/>
            <person name="Chiu K.P."/>
            <person name="Choudhary V."/>
            <person name="Christoffels A."/>
            <person name="Clutterbuck D.R."/>
            <person name="Crowe M.L."/>
            <person name="Dalla E."/>
            <person name="Dalrymple B.P."/>
            <person name="de Bono B."/>
            <person name="Della Gatta G."/>
            <person name="di Bernardo D."/>
            <person name="Down T."/>
            <person name="Engstrom P."/>
            <person name="Fagiolini M."/>
            <person name="Faulkner G."/>
            <person name="Fletcher C.F."/>
            <person name="Fukushima T."/>
            <person name="Furuno M."/>
            <person name="Futaki S."/>
            <person name="Gariboldi M."/>
            <person name="Georgii-Hemming P."/>
            <person name="Gingeras T.R."/>
            <person name="Gojobori T."/>
            <person name="Green R.E."/>
            <person name="Gustincich S."/>
            <person name="Harbers M."/>
            <person name="Hayashi Y."/>
            <person name="Hensch T.K."/>
            <person name="Hirokawa N."/>
            <person name="Hill D."/>
            <person name="Huminiecki L."/>
            <person name="Iacono M."/>
            <person name="Ikeo K."/>
            <person name="Iwama A."/>
            <person name="Ishikawa T."/>
            <person name="Jakt M."/>
            <person name="Kanapin A."/>
            <person name="Katoh M."/>
            <person name="Kawasawa Y."/>
            <person name="Kelso J."/>
            <person name="Kitamura H."/>
            <person name="Kitano H."/>
            <person name="Kollias G."/>
            <person name="Krishnan S.P."/>
            <person name="Kruger A."/>
            <person name="Kummerfeld S.K."/>
            <person name="Kurochkin I.V."/>
            <person name="Lareau L.F."/>
            <person name="Lazarevic D."/>
            <person name="Lipovich L."/>
            <person name="Liu J."/>
            <person name="Liuni S."/>
            <person name="McWilliam S."/>
            <person name="Madan Babu M."/>
            <person name="Madera M."/>
            <person name="Marchionni L."/>
            <person name="Matsuda H."/>
            <person name="Matsuzawa S."/>
            <person name="Miki H."/>
            <person name="Mignone F."/>
            <person name="Miyake S."/>
            <person name="Morris K."/>
            <person name="Mottagui-Tabar S."/>
            <person name="Mulder N."/>
            <person name="Nakano N."/>
            <person name="Nakauchi H."/>
            <person name="Ng P."/>
            <person name="Nilsson R."/>
            <person name="Nishiguchi S."/>
            <person name="Nishikawa S."/>
            <person name="Nori F."/>
            <person name="Ohara O."/>
            <person name="Okazaki Y."/>
            <person name="Orlando V."/>
            <person name="Pang K.C."/>
            <person name="Pavan W.J."/>
            <person name="Pavesi G."/>
            <person name="Pesole G."/>
            <person name="Petrovsky N."/>
            <person name="Piazza S."/>
            <person name="Reed J."/>
            <person name="Reid J.F."/>
            <person name="Ring B.Z."/>
            <person name="Ringwald M."/>
            <person name="Rost B."/>
            <person name="Ruan Y."/>
            <person name="Salzberg S.L."/>
            <person name="Sandelin A."/>
            <person name="Schneider C."/>
            <person name="Schoenbach C."/>
            <person name="Sekiguchi K."/>
            <person name="Semple C.A."/>
            <person name="Seno S."/>
            <person name="Sessa L."/>
            <person name="Sheng Y."/>
            <person name="Shibata Y."/>
            <person name="Shimada H."/>
            <person name="Shimada K."/>
            <person name="Silva D."/>
            <person name="Sinclair B."/>
            <person name="Sperling S."/>
            <person name="Stupka E."/>
            <person name="Sugiura K."/>
            <person name="Sultana R."/>
            <person name="Takenaka Y."/>
            <person name="Taki K."/>
            <person name="Tammoja K."/>
            <person name="Tan S.L."/>
            <person name="Tang S."/>
            <person name="Taylor M.S."/>
            <person name="Tegner J."/>
            <person name="Teichmann S.A."/>
            <person name="Ueda H.R."/>
            <person name="van Nimwegen E."/>
            <person name="Verardo R."/>
            <person name="Wei C.L."/>
            <person name="Yagi K."/>
            <person name="Yamanishi H."/>
            <person name="Zabarovsky E."/>
            <person name="Zhu S."/>
            <person name="Zimmer A."/>
            <person name="Hide W."/>
            <person name="Bult C."/>
            <person name="Grimmond S.M."/>
            <person name="Teasdale R.D."/>
            <person name="Liu E.T."/>
            <person name="Brusic V."/>
            <person name="Quackenbush J."/>
            <person name="Wahlestedt C."/>
            <person name="Mattick J.S."/>
            <person name="Hume D.A."/>
            <person name="Kai C."/>
            <person name="Sasaki D."/>
            <person name="Tomaru Y."/>
            <person name="Fukuda S."/>
            <person name="Kanamori-Katayama M."/>
            <person name="Suzuki M."/>
            <person name="Aoki J."/>
            <person name="Arakawa T."/>
            <person name="Iida J."/>
            <person name="Imamura K."/>
            <person name="Itoh M."/>
            <person name="Kato T."/>
            <person name="Kawaji H."/>
            <person name="Kawagashira N."/>
            <person name="Kawashima T."/>
            <person name="Kojima M."/>
            <person name="Kondo S."/>
            <person name="Konno H."/>
            <person name="Nakano K."/>
            <person name="Ninomiya N."/>
            <person name="Nishio T."/>
            <person name="Okada M."/>
            <person name="Plessy C."/>
            <person name="Shibata K."/>
            <person name="Shiraki T."/>
            <person name="Suzuki S."/>
            <person name="Tagami M."/>
            <person name="Waki K."/>
            <person name="Watahiki A."/>
            <person name="Okamura-Oho Y."/>
            <person name="Suzuki H."/>
            <person name="Kawai J."/>
            <person name="Hayashizaki Y."/>
        </authorList>
    </citation>
    <scope>NUCLEOTIDE SEQUENCE [LARGE SCALE MRNA]</scope>
    <source>
        <strain>C57BL/6J</strain>
        <strain>NOD</strain>
        <tissue>Aorta</tissue>
        <tissue>Dendritic cell</tissue>
    </source>
</reference>
<reference key="3">
    <citation type="journal article" date="2004" name="Genome Res.">
        <title>The status, quality, and expansion of the NIH full-length cDNA project: the Mammalian Gene Collection (MGC).</title>
        <authorList>
            <consortium name="The MGC Project Team"/>
        </authorList>
    </citation>
    <scope>NUCLEOTIDE SEQUENCE [LARGE SCALE MRNA]</scope>
    <source>
        <strain>FVB/N</strain>
        <tissue>Colon</tissue>
    </source>
</reference>
<reference key="4">
    <citation type="journal article" date="2018" name="Invest. Ophthalmol. Vis. Sci.">
        <title>Keratan Sulfate Phenotype in the beta-1,3-N-Acetylglucosaminyltransferase-7-Null Mouse Cornea.</title>
        <authorList>
            <person name="Littlechild S.L."/>
            <person name="Young R.D."/>
            <person name="Caterson B."/>
            <person name="Yoshida H."/>
            <person name="Yamazaki M."/>
            <person name="Sakimura K."/>
            <person name="Quantock A.J."/>
            <person name="Akama T.O."/>
        </authorList>
    </citation>
    <scope>FUNCTION</scope>
    <scope>DISRUPTION PHENOTYPE</scope>
</reference>
<evidence type="ECO:0000250" key="1">
    <source>
        <dbReference type="UniProtKB" id="Q8NFL0"/>
    </source>
</evidence>
<evidence type="ECO:0000255" key="2"/>
<evidence type="ECO:0000269" key="3">
    <source>
    </source>
</evidence>
<evidence type="ECO:0000269" key="4">
    <source>
    </source>
</evidence>
<evidence type="ECO:0000305" key="5"/>
<name>B3GN7_MOUSE</name>
<feature type="chain" id="PRO_0000264619" description="UDP-GlcNAc:betaGal beta-1,3-N-acetylglucosaminyltransferase 7">
    <location>
        <begin position="1"/>
        <end position="397"/>
    </location>
</feature>
<feature type="topological domain" description="Cytoplasmic" evidence="2">
    <location>
        <begin position="1"/>
        <end position="6"/>
    </location>
</feature>
<feature type="transmembrane region" description="Helical" evidence="2">
    <location>
        <begin position="7"/>
        <end position="26"/>
    </location>
</feature>
<feature type="topological domain" description="Lumenal" evidence="2">
    <location>
        <begin position="27"/>
        <end position="397"/>
    </location>
</feature>
<feature type="glycosylation site" description="N-linked (GlcNAc...) asparagine" evidence="2">
    <location>
        <position position="84"/>
    </location>
</feature>
<feature type="glycosylation site" description="N-linked (GlcNAc...) asparagine" evidence="2">
    <location>
        <position position="90"/>
    </location>
</feature>
<feature type="glycosylation site" description="N-linked (GlcNAc...) asparagine" evidence="2">
    <location>
        <position position="210"/>
    </location>
</feature>
<feature type="glycosylation site" description="N-linked (GlcNAc...) asparagine" evidence="2">
    <location>
        <position position="387"/>
    </location>
</feature>
<feature type="sequence conflict" description="In Ref. 2; BAC37824." evidence="5" ref="2">
    <original>D</original>
    <variation>N</variation>
    <location>
        <position position="203"/>
    </location>
</feature>
<feature type="sequence conflict" description="In Ref. 3; AAH31187." evidence="5" ref="3">
    <original>F</original>
    <variation>S</variation>
    <location>
        <position position="208"/>
    </location>
</feature>
<feature type="sequence conflict" description="In Ref. 1; AAM61769." evidence="5" ref="1">
    <original>I</original>
    <variation>T</variation>
    <location>
        <position position="271"/>
    </location>
</feature>
<feature type="sequence conflict" description="In Ref. 2; BAE20915." evidence="5" ref="2">
    <original>Y</original>
    <variation>H</variation>
    <location>
        <position position="290"/>
    </location>
</feature>
<feature type="sequence conflict" description="In Ref. 3; AAH31187/AAH60507." evidence="5" ref="3">
    <original>Q</original>
    <variation>R</variation>
    <location>
        <position position="395"/>
    </location>
</feature>
<keyword id="KW-0325">Glycoprotein</keyword>
<keyword id="KW-0328">Glycosyltransferase</keyword>
<keyword id="KW-0333">Golgi apparatus</keyword>
<keyword id="KW-0472">Membrane</keyword>
<keyword id="KW-1185">Reference proteome</keyword>
<keyword id="KW-0735">Signal-anchor</keyword>
<keyword id="KW-0808">Transferase</keyword>
<keyword id="KW-0812">Transmembrane</keyword>
<keyword id="KW-1133">Transmembrane helix</keyword>
<protein>
    <recommendedName>
        <fullName>UDP-GlcNAc:betaGal beta-1,3-N-acetylglucosaminyltransferase 7</fullName>
        <shortName>BGnT-7</shortName>
        <shortName>Beta-1,3-Gn-T7</shortName>
        <shortName>Beta-1,3-N-acetylglucosaminyltransferase 7</shortName>
        <shortName>Beta3Gn-T7</shortName>
        <ecNumber evidence="1">2.4.1.-</ecNumber>
    </recommendedName>
</protein>
<proteinExistence type="evidence at transcript level"/>
<dbReference type="EC" id="2.4.1.-" evidence="1"/>
<dbReference type="EMBL" id="AF502429">
    <property type="protein sequence ID" value="AAM61769.1"/>
    <property type="molecule type" value="mRNA"/>
</dbReference>
<dbReference type="EMBL" id="AK080081">
    <property type="protein sequence ID" value="BAC37824.1"/>
    <property type="molecule type" value="mRNA"/>
</dbReference>
<dbReference type="EMBL" id="AK131975">
    <property type="protein sequence ID" value="BAE20915.1"/>
    <property type="molecule type" value="mRNA"/>
</dbReference>
<dbReference type="EMBL" id="AK154691">
    <property type="protein sequence ID" value="BAE32766.1"/>
    <property type="molecule type" value="mRNA"/>
</dbReference>
<dbReference type="EMBL" id="BC031187">
    <property type="protein sequence ID" value="AAH31187.1"/>
    <property type="molecule type" value="mRNA"/>
</dbReference>
<dbReference type="EMBL" id="BC060507">
    <property type="protein sequence ID" value="AAH60507.1"/>
    <property type="molecule type" value="mRNA"/>
</dbReference>
<dbReference type="CCDS" id="CCDS35645.1"/>
<dbReference type="RefSeq" id="NP_660257.2">
    <property type="nucleotide sequence ID" value="NM_145222.2"/>
</dbReference>
<dbReference type="SMR" id="Q8K0J2"/>
<dbReference type="FunCoup" id="Q8K0J2">
    <property type="interactions" value="277"/>
</dbReference>
<dbReference type="STRING" id="10090.ENSMUSP00000108931"/>
<dbReference type="CAZy" id="GT31">
    <property type="family name" value="Glycosyltransferase Family 31"/>
</dbReference>
<dbReference type="GlyCosmos" id="Q8K0J2">
    <property type="glycosylation" value="4 sites, No reported glycans"/>
</dbReference>
<dbReference type="GlyGen" id="Q8K0J2">
    <property type="glycosylation" value="8 sites"/>
</dbReference>
<dbReference type="PhosphoSitePlus" id="Q8K0J2"/>
<dbReference type="PaxDb" id="10090-ENSMUSP00000108931"/>
<dbReference type="ProteomicsDB" id="277097"/>
<dbReference type="Antibodypedia" id="34416">
    <property type="antibodies" value="95 antibodies from 18 providers"/>
</dbReference>
<dbReference type="DNASU" id="227327"/>
<dbReference type="Ensembl" id="ENSMUST00000113306.4">
    <property type="protein sequence ID" value="ENSMUSP00000108931.3"/>
    <property type="gene ID" value="ENSMUSG00000079445.4"/>
</dbReference>
<dbReference type="GeneID" id="227327"/>
<dbReference type="KEGG" id="mmu:227327"/>
<dbReference type="UCSC" id="uc007bvk.2">
    <property type="organism name" value="mouse"/>
</dbReference>
<dbReference type="AGR" id="MGI:2384394"/>
<dbReference type="CTD" id="93010"/>
<dbReference type="MGI" id="MGI:2384394">
    <property type="gene designation" value="B3gnt7"/>
</dbReference>
<dbReference type="VEuPathDB" id="HostDB:ENSMUSG00000079445"/>
<dbReference type="eggNOG" id="KOG2287">
    <property type="taxonomic scope" value="Eukaryota"/>
</dbReference>
<dbReference type="GeneTree" id="ENSGT00940000157606"/>
<dbReference type="HOGENOM" id="CLU_036849_5_1_1"/>
<dbReference type="InParanoid" id="Q8K0J2"/>
<dbReference type="OMA" id="MFQWKKT"/>
<dbReference type="OrthoDB" id="2139606at2759"/>
<dbReference type="PhylomeDB" id="Q8K0J2"/>
<dbReference type="TreeFam" id="TF318639"/>
<dbReference type="BRENDA" id="2.4.1.149">
    <property type="organism ID" value="3474"/>
</dbReference>
<dbReference type="Reactome" id="R-MMU-2022854">
    <property type="pathway name" value="Keratan sulfate biosynthesis"/>
</dbReference>
<dbReference type="Reactome" id="R-MMU-913709">
    <property type="pathway name" value="O-linked glycosylation of mucins"/>
</dbReference>
<dbReference type="UniPathway" id="UPA00378"/>
<dbReference type="BioGRID-ORCS" id="227327">
    <property type="hits" value="3 hits in 77 CRISPR screens"/>
</dbReference>
<dbReference type="PRO" id="PR:Q8K0J2"/>
<dbReference type="Proteomes" id="UP000000589">
    <property type="component" value="Chromosome 1"/>
</dbReference>
<dbReference type="RNAct" id="Q8K0J2">
    <property type="molecule type" value="protein"/>
</dbReference>
<dbReference type="Bgee" id="ENSMUSG00000079445">
    <property type="expression patterns" value="Expressed in left colon and 71 other cell types or tissues"/>
</dbReference>
<dbReference type="ExpressionAtlas" id="Q8K0J2">
    <property type="expression patterns" value="baseline and differential"/>
</dbReference>
<dbReference type="GO" id="GO:0000139">
    <property type="term" value="C:Golgi membrane"/>
    <property type="evidence" value="ECO:0007669"/>
    <property type="project" value="UniProtKB-SubCell"/>
</dbReference>
<dbReference type="GO" id="GO:0008375">
    <property type="term" value="F:acetylglucosaminyltransferase activity"/>
    <property type="evidence" value="ECO:0000250"/>
    <property type="project" value="UniProtKB"/>
</dbReference>
<dbReference type="GO" id="GO:0018146">
    <property type="term" value="P:keratan sulfate proteoglycan biosynthetic process"/>
    <property type="evidence" value="ECO:0000315"/>
    <property type="project" value="UniProtKB"/>
</dbReference>
<dbReference type="GO" id="GO:0006486">
    <property type="term" value="P:protein glycosylation"/>
    <property type="evidence" value="ECO:0000250"/>
    <property type="project" value="MGI"/>
</dbReference>
<dbReference type="FunFam" id="3.90.550.50:FF:000014">
    <property type="entry name" value="Hexosyltransferase"/>
    <property type="match status" value="1"/>
</dbReference>
<dbReference type="Gene3D" id="3.90.550.50">
    <property type="match status" value="1"/>
</dbReference>
<dbReference type="InterPro" id="IPR002659">
    <property type="entry name" value="Glyco_trans_31"/>
</dbReference>
<dbReference type="PANTHER" id="PTHR11214">
    <property type="entry name" value="BETA-1,3-N-ACETYLGLUCOSAMINYLTRANSFERASE"/>
    <property type="match status" value="1"/>
</dbReference>
<dbReference type="PANTHER" id="PTHR11214:SF93">
    <property type="entry name" value="UDP-GLCNAC:BETAGAL BETA-1,3-N-ACETYLGLUCOSAMINYLTRANSFERASE 7"/>
    <property type="match status" value="1"/>
</dbReference>
<dbReference type="Pfam" id="PF01762">
    <property type="entry name" value="Galactosyl_T"/>
    <property type="match status" value="1"/>
</dbReference>